<evidence type="ECO:0000255" key="1">
    <source>
        <dbReference type="HAMAP-Rule" id="MF_00172"/>
    </source>
</evidence>
<sequence length="767" mass="85444">MSTLTSVSGFPRIGQNRELKKIIEGYWKGANDLAAVKATAAELRAKHWRLQQAAGIDLIASNDFSYYDQMLDTAILLNVIPQRYQRLAFDDQEDTLFAMARGYQGDKGDVTALPMKKWFTTNYHYLVPEVEPSAEIKLNSTKPFDEFNEAKSLGVETKPVFIGPYTFLKLARTPEAAELEIDKGLVNAVAAVYAEVLARFNDLGAAWVQLDEPYLVLDKEPGDVELFKALYTKILPAKGNVKVLLNTYFGHIADVYETVNLFGFDGIGLDLNEGREENLEAVAKYGVAAGTTIFAGVINGRNIWRNNYATSLGLVDALKQVTADVAVSTASSLLHVPFSTEGETGIPAEDLKHFAFAVQKLGELKEIAALTDATEDEKKSSAALAANQALFDGTRVAADPAVAERIGKLSDADYVRQPAREERQSLQREALGLPLLPTTTIGSFPQTKEIRAERAKLRKGEVTKEAYDEFIASQIDAVIRKQEEIGLDVLVHGEFERNDMVEYFGQNLNGFLFTKNAWVQSYGTRCVKPPIVWGDVSRANPITVEWSAYAQSKTDHVMKGMLTGPVTILNWSWPREDITHEEQTKQLALAIRDEVLDLEAAGIKIIQIDEAALREKLPLRKSDWHAKYLDWAIPAFRLVHSAVKPTTQIHTHMCYSEFNDIIRDIDAMDADVISFEASRGDLVVLDAIHDARFETEAGPGVYDIHSPRIPSEKEIEDRIYEILDKIDVKKVWINPDCGLKTRGNDETWPSLEHLVAAAKAVRARLDK</sequence>
<dbReference type="EC" id="2.1.1.14" evidence="1"/>
<dbReference type="EMBL" id="CP001095">
    <property type="protein sequence ID" value="ACJ52538.1"/>
    <property type="molecule type" value="Genomic_DNA"/>
</dbReference>
<dbReference type="EMBL" id="AP010889">
    <property type="protein sequence ID" value="BAJ69084.1"/>
    <property type="molecule type" value="Genomic_DNA"/>
</dbReference>
<dbReference type="RefSeq" id="WP_012577777.1">
    <property type="nucleotide sequence ID" value="NC_011593.1"/>
</dbReference>
<dbReference type="SMR" id="B7GRV8"/>
<dbReference type="KEGG" id="bln:Blon_1455"/>
<dbReference type="KEGG" id="blon:BLIJ_1501"/>
<dbReference type="PATRIC" id="fig|391904.8.peg.1514"/>
<dbReference type="HOGENOM" id="CLU_013175_0_0_11"/>
<dbReference type="UniPathway" id="UPA00051">
    <property type="reaction ID" value="UER00082"/>
</dbReference>
<dbReference type="Proteomes" id="UP000001360">
    <property type="component" value="Chromosome"/>
</dbReference>
<dbReference type="GO" id="GO:0003871">
    <property type="term" value="F:5-methyltetrahydropteroyltriglutamate-homocysteine S-methyltransferase activity"/>
    <property type="evidence" value="ECO:0007669"/>
    <property type="project" value="UniProtKB-UniRule"/>
</dbReference>
<dbReference type="GO" id="GO:0008270">
    <property type="term" value="F:zinc ion binding"/>
    <property type="evidence" value="ECO:0007669"/>
    <property type="project" value="InterPro"/>
</dbReference>
<dbReference type="GO" id="GO:0009086">
    <property type="term" value="P:methionine biosynthetic process"/>
    <property type="evidence" value="ECO:0007669"/>
    <property type="project" value="UniProtKB-UniRule"/>
</dbReference>
<dbReference type="GO" id="GO:0032259">
    <property type="term" value="P:methylation"/>
    <property type="evidence" value="ECO:0007669"/>
    <property type="project" value="UniProtKB-KW"/>
</dbReference>
<dbReference type="CDD" id="cd03311">
    <property type="entry name" value="CIMS_C_terminal_like"/>
    <property type="match status" value="1"/>
</dbReference>
<dbReference type="CDD" id="cd03312">
    <property type="entry name" value="CIMS_N_terminal_like"/>
    <property type="match status" value="1"/>
</dbReference>
<dbReference type="Gene3D" id="3.20.20.210">
    <property type="match status" value="2"/>
</dbReference>
<dbReference type="HAMAP" id="MF_00172">
    <property type="entry name" value="Meth_synth"/>
    <property type="match status" value="1"/>
</dbReference>
<dbReference type="InterPro" id="IPR013215">
    <property type="entry name" value="Cbl-indep_Met_Synth_N"/>
</dbReference>
<dbReference type="InterPro" id="IPR006276">
    <property type="entry name" value="Cobalamin-indep_Met_synthase"/>
</dbReference>
<dbReference type="InterPro" id="IPR002629">
    <property type="entry name" value="Met_Synth_C/arc"/>
</dbReference>
<dbReference type="InterPro" id="IPR038071">
    <property type="entry name" value="UROD/MetE-like_sf"/>
</dbReference>
<dbReference type="NCBIfam" id="TIGR01371">
    <property type="entry name" value="met_syn_B12ind"/>
    <property type="match status" value="1"/>
</dbReference>
<dbReference type="NCBIfam" id="NF003556">
    <property type="entry name" value="PRK05222.1"/>
    <property type="match status" value="1"/>
</dbReference>
<dbReference type="PANTHER" id="PTHR30519">
    <property type="entry name" value="5-METHYLTETRAHYDROPTEROYLTRIGLUTAMATE--HOMOCYSTEINE METHYLTRANSFERASE"/>
    <property type="match status" value="1"/>
</dbReference>
<dbReference type="Pfam" id="PF08267">
    <property type="entry name" value="Meth_synt_1"/>
    <property type="match status" value="1"/>
</dbReference>
<dbReference type="Pfam" id="PF01717">
    <property type="entry name" value="Meth_synt_2"/>
    <property type="match status" value="1"/>
</dbReference>
<dbReference type="PIRSF" id="PIRSF000382">
    <property type="entry name" value="MeTrfase_B12_ind"/>
    <property type="match status" value="1"/>
</dbReference>
<dbReference type="SUPFAM" id="SSF51726">
    <property type="entry name" value="UROD/MetE-like"/>
    <property type="match status" value="2"/>
</dbReference>
<accession>B7GRV8</accession>
<accession>E8MKK7</accession>
<keyword id="KW-0028">Amino-acid biosynthesis</keyword>
<keyword id="KW-0479">Metal-binding</keyword>
<keyword id="KW-0486">Methionine biosynthesis</keyword>
<keyword id="KW-0489">Methyltransferase</keyword>
<keyword id="KW-0677">Repeat</keyword>
<keyword id="KW-0808">Transferase</keyword>
<keyword id="KW-0862">Zinc</keyword>
<feature type="chain" id="PRO_1000123779" description="5-methyltetrahydropteroyltriglutamate--homocysteine methyltransferase">
    <location>
        <begin position="1"/>
        <end position="767"/>
    </location>
</feature>
<feature type="active site" description="Proton donor" evidence="1">
    <location>
        <position position="705"/>
    </location>
</feature>
<feature type="binding site" evidence="1">
    <location>
        <begin position="17"/>
        <end position="20"/>
    </location>
    <ligand>
        <name>5-methyltetrahydropteroyltri-L-glutamate</name>
        <dbReference type="ChEBI" id="CHEBI:58207"/>
    </ligand>
</feature>
<feature type="binding site" evidence="1">
    <location>
        <position position="117"/>
    </location>
    <ligand>
        <name>5-methyltetrahydropteroyltri-L-glutamate</name>
        <dbReference type="ChEBI" id="CHEBI:58207"/>
    </ligand>
</feature>
<feature type="binding site" evidence="1">
    <location>
        <begin position="441"/>
        <end position="443"/>
    </location>
    <ligand>
        <name>L-homocysteine</name>
        <dbReference type="ChEBI" id="CHEBI:58199"/>
    </ligand>
</feature>
<feature type="binding site" evidence="1">
    <location>
        <begin position="441"/>
        <end position="443"/>
    </location>
    <ligand>
        <name>L-methionine</name>
        <dbReference type="ChEBI" id="CHEBI:57844"/>
    </ligand>
</feature>
<feature type="binding site" evidence="1">
    <location>
        <position position="494"/>
    </location>
    <ligand>
        <name>L-homocysteine</name>
        <dbReference type="ChEBI" id="CHEBI:58199"/>
    </ligand>
</feature>
<feature type="binding site" evidence="1">
    <location>
        <position position="494"/>
    </location>
    <ligand>
        <name>L-methionine</name>
        <dbReference type="ChEBI" id="CHEBI:57844"/>
    </ligand>
</feature>
<feature type="binding site" evidence="1">
    <location>
        <begin position="525"/>
        <end position="526"/>
    </location>
    <ligand>
        <name>5-methyltetrahydropteroyltri-L-glutamate</name>
        <dbReference type="ChEBI" id="CHEBI:58207"/>
    </ligand>
</feature>
<feature type="binding site" evidence="1">
    <location>
        <position position="571"/>
    </location>
    <ligand>
        <name>5-methyltetrahydropteroyltri-L-glutamate</name>
        <dbReference type="ChEBI" id="CHEBI:58207"/>
    </ligand>
</feature>
<feature type="binding site" evidence="1">
    <location>
        <position position="609"/>
    </location>
    <ligand>
        <name>L-homocysteine</name>
        <dbReference type="ChEBI" id="CHEBI:58199"/>
    </ligand>
</feature>
<feature type="binding site" evidence="1">
    <location>
        <position position="609"/>
    </location>
    <ligand>
        <name>L-methionine</name>
        <dbReference type="ChEBI" id="CHEBI:57844"/>
    </ligand>
</feature>
<feature type="binding site" evidence="1">
    <location>
        <position position="615"/>
    </location>
    <ligand>
        <name>5-methyltetrahydropteroyltri-L-glutamate</name>
        <dbReference type="ChEBI" id="CHEBI:58207"/>
    </ligand>
</feature>
<feature type="binding site" evidence="1">
    <location>
        <position position="652"/>
    </location>
    <ligand>
        <name>Zn(2+)</name>
        <dbReference type="ChEBI" id="CHEBI:29105"/>
        <note>catalytic</note>
    </ligand>
</feature>
<feature type="binding site" evidence="1">
    <location>
        <position position="654"/>
    </location>
    <ligand>
        <name>Zn(2+)</name>
        <dbReference type="ChEBI" id="CHEBI:29105"/>
        <note>catalytic</note>
    </ligand>
</feature>
<feature type="binding site" evidence="1">
    <location>
        <position position="676"/>
    </location>
    <ligand>
        <name>Zn(2+)</name>
        <dbReference type="ChEBI" id="CHEBI:29105"/>
        <note>catalytic</note>
    </ligand>
</feature>
<feature type="binding site" evidence="1">
    <location>
        <position position="737"/>
    </location>
    <ligand>
        <name>Zn(2+)</name>
        <dbReference type="ChEBI" id="CHEBI:29105"/>
        <note>catalytic</note>
    </ligand>
</feature>
<comment type="function">
    <text evidence="1">Catalyzes the transfer of a methyl group from 5-methyltetrahydrofolate to homocysteine resulting in methionine formation.</text>
</comment>
<comment type="catalytic activity">
    <reaction evidence="1">
        <text>5-methyltetrahydropteroyltri-L-glutamate + L-homocysteine = tetrahydropteroyltri-L-glutamate + L-methionine</text>
        <dbReference type="Rhea" id="RHEA:21196"/>
        <dbReference type="ChEBI" id="CHEBI:57844"/>
        <dbReference type="ChEBI" id="CHEBI:58140"/>
        <dbReference type="ChEBI" id="CHEBI:58199"/>
        <dbReference type="ChEBI" id="CHEBI:58207"/>
        <dbReference type="EC" id="2.1.1.14"/>
    </reaction>
</comment>
<comment type="cofactor">
    <cofactor evidence="1">
        <name>Zn(2+)</name>
        <dbReference type="ChEBI" id="CHEBI:29105"/>
    </cofactor>
    <text evidence="1">Binds 1 zinc ion per subunit.</text>
</comment>
<comment type="pathway">
    <text evidence="1">Amino-acid biosynthesis; L-methionine biosynthesis via de novo pathway; L-methionine from L-homocysteine (MetE route): step 1/1.</text>
</comment>
<comment type="similarity">
    <text evidence="1">Belongs to the vitamin-B12 independent methionine synthase family.</text>
</comment>
<proteinExistence type="inferred from homology"/>
<reference key="1">
    <citation type="journal article" date="2008" name="Proc. Natl. Acad. Sci. U.S.A.">
        <title>The genome sequence of Bifidobacterium longum subsp. infantis reveals adaptations for milk utilization within the infant microbiome.</title>
        <authorList>
            <person name="Sela D.A."/>
            <person name="Chapman J."/>
            <person name="Adeuya A."/>
            <person name="Kim J.H."/>
            <person name="Chen F."/>
            <person name="Whitehead T.R."/>
            <person name="Lapidus A."/>
            <person name="Rokhsar D.S."/>
            <person name="Lebrilla C.B."/>
            <person name="German J.B."/>
            <person name="Price N.P."/>
            <person name="Richardson P.M."/>
            <person name="Mills D.A."/>
        </authorList>
    </citation>
    <scope>NUCLEOTIDE SEQUENCE [LARGE SCALE GENOMIC DNA]</scope>
    <source>
        <strain>ATCC 15697 / DSM 20088 / JCM 1222 / NCTC 11817 / S12</strain>
    </source>
</reference>
<reference key="2">
    <citation type="journal article" date="2011" name="Nature">
        <title>Bifidobacteria can protect from enteropathogenic infection through production of acetate.</title>
        <authorList>
            <person name="Fukuda S."/>
            <person name="Toh H."/>
            <person name="Hase K."/>
            <person name="Oshima K."/>
            <person name="Nakanishi Y."/>
            <person name="Yoshimura K."/>
            <person name="Tobe T."/>
            <person name="Clarke J.M."/>
            <person name="Topping D.L."/>
            <person name="Suzuki T."/>
            <person name="Taylor T.D."/>
            <person name="Itoh K."/>
            <person name="Kikuchi J."/>
            <person name="Morita H."/>
            <person name="Hattori M."/>
            <person name="Ohno H."/>
        </authorList>
    </citation>
    <scope>NUCLEOTIDE SEQUENCE [LARGE SCALE GENOMIC DNA]</scope>
    <source>
        <strain>ATCC 15697 / DSM 20088 / JCM 1222 / NCTC 11817 / S12</strain>
    </source>
</reference>
<organism>
    <name type="scientific">Bifidobacterium longum subsp. infantis (strain ATCC 15697 / DSM 20088 / JCM 1222 / NCTC 11817 / S12)</name>
    <dbReference type="NCBI Taxonomy" id="391904"/>
    <lineage>
        <taxon>Bacteria</taxon>
        <taxon>Bacillati</taxon>
        <taxon>Actinomycetota</taxon>
        <taxon>Actinomycetes</taxon>
        <taxon>Bifidobacteriales</taxon>
        <taxon>Bifidobacteriaceae</taxon>
        <taxon>Bifidobacterium</taxon>
    </lineage>
</organism>
<name>METE_BIFLS</name>
<gene>
    <name evidence="1" type="primary">metE</name>
    <name type="ordered locus">Blon_1455</name>
    <name type="ordered locus">BLIJ_1501</name>
</gene>
<protein>
    <recommendedName>
        <fullName evidence="1">5-methyltetrahydropteroyltriglutamate--homocysteine methyltransferase</fullName>
        <ecNumber evidence="1">2.1.1.14</ecNumber>
    </recommendedName>
    <alternativeName>
        <fullName evidence="1">Cobalamin-independent methionine synthase</fullName>
    </alternativeName>
    <alternativeName>
        <fullName evidence="1">Methionine synthase, vitamin-B12 independent isozyme</fullName>
    </alternativeName>
</protein>